<feature type="chain" id="PRO_1000061847" description="Ribosomal RNA large subunit methyltransferase H">
    <location>
        <begin position="1"/>
        <end position="159"/>
    </location>
</feature>
<feature type="binding site" evidence="1">
    <location>
        <position position="76"/>
    </location>
    <ligand>
        <name>S-adenosyl-L-methionine</name>
        <dbReference type="ChEBI" id="CHEBI:59789"/>
    </ligand>
</feature>
<feature type="binding site" evidence="1">
    <location>
        <position position="108"/>
    </location>
    <ligand>
        <name>S-adenosyl-L-methionine</name>
        <dbReference type="ChEBI" id="CHEBI:59789"/>
    </ligand>
</feature>
<feature type="binding site" evidence="1">
    <location>
        <begin position="127"/>
        <end position="132"/>
    </location>
    <ligand>
        <name>S-adenosyl-L-methionine</name>
        <dbReference type="ChEBI" id="CHEBI:59789"/>
    </ligand>
</feature>
<comment type="function">
    <text evidence="1">Specifically methylates the pseudouridine at position 1915 (m3Psi1915) in 23S rRNA.</text>
</comment>
<comment type="catalytic activity">
    <reaction evidence="1">
        <text>pseudouridine(1915) in 23S rRNA + S-adenosyl-L-methionine = N(3)-methylpseudouridine(1915) in 23S rRNA + S-adenosyl-L-homocysteine + H(+)</text>
        <dbReference type="Rhea" id="RHEA:42752"/>
        <dbReference type="Rhea" id="RHEA-COMP:10221"/>
        <dbReference type="Rhea" id="RHEA-COMP:10222"/>
        <dbReference type="ChEBI" id="CHEBI:15378"/>
        <dbReference type="ChEBI" id="CHEBI:57856"/>
        <dbReference type="ChEBI" id="CHEBI:59789"/>
        <dbReference type="ChEBI" id="CHEBI:65314"/>
        <dbReference type="ChEBI" id="CHEBI:74486"/>
        <dbReference type="EC" id="2.1.1.177"/>
    </reaction>
</comment>
<comment type="subunit">
    <text evidence="1">Homodimer.</text>
</comment>
<comment type="subcellular location">
    <subcellularLocation>
        <location evidence="1">Cytoplasm</location>
    </subcellularLocation>
</comment>
<comment type="similarity">
    <text evidence="1">Belongs to the RNA methyltransferase RlmH family.</text>
</comment>
<organism>
    <name type="scientific">Streptococcus pneumoniae serotype 2 (strain D39 / NCTC 7466)</name>
    <dbReference type="NCBI Taxonomy" id="373153"/>
    <lineage>
        <taxon>Bacteria</taxon>
        <taxon>Bacillati</taxon>
        <taxon>Bacillota</taxon>
        <taxon>Bacilli</taxon>
        <taxon>Lactobacillales</taxon>
        <taxon>Streptococcaceae</taxon>
        <taxon>Streptococcus</taxon>
    </lineage>
</organism>
<dbReference type="EC" id="2.1.1.177" evidence="1"/>
<dbReference type="EMBL" id="CP000410">
    <property type="protein sequence ID" value="ABJ53856.1"/>
    <property type="molecule type" value="Genomic_DNA"/>
</dbReference>
<dbReference type="RefSeq" id="WP_000695929.1">
    <property type="nucleotide sequence ID" value="NZ_JAMLJR010000007.1"/>
</dbReference>
<dbReference type="SMR" id="Q04HU2"/>
<dbReference type="PaxDb" id="373153-SPD_2067"/>
<dbReference type="GeneID" id="45652538"/>
<dbReference type="KEGG" id="spd:SPD_2067"/>
<dbReference type="eggNOG" id="COG1576">
    <property type="taxonomic scope" value="Bacteria"/>
</dbReference>
<dbReference type="HOGENOM" id="CLU_100552_0_0_9"/>
<dbReference type="BioCyc" id="SPNE373153:G1G6V-2218-MONOMER"/>
<dbReference type="Proteomes" id="UP000001452">
    <property type="component" value="Chromosome"/>
</dbReference>
<dbReference type="GO" id="GO:0005737">
    <property type="term" value="C:cytoplasm"/>
    <property type="evidence" value="ECO:0007669"/>
    <property type="project" value="UniProtKB-SubCell"/>
</dbReference>
<dbReference type="GO" id="GO:0070038">
    <property type="term" value="F:rRNA (pseudouridine-N3-)-methyltransferase activity"/>
    <property type="evidence" value="ECO:0007669"/>
    <property type="project" value="UniProtKB-UniRule"/>
</dbReference>
<dbReference type="CDD" id="cd18081">
    <property type="entry name" value="RlmH-like"/>
    <property type="match status" value="1"/>
</dbReference>
<dbReference type="Gene3D" id="3.40.1280.10">
    <property type="match status" value="1"/>
</dbReference>
<dbReference type="HAMAP" id="MF_00658">
    <property type="entry name" value="23SrRNA_methyltr_H"/>
    <property type="match status" value="1"/>
</dbReference>
<dbReference type="InterPro" id="IPR029028">
    <property type="entry name" value="Alpha/beta_knot_MTases"/>
</dbReference>
<dbReference type="InterPro" id="IPR003742">
    <property type="entry name" value="RlmH-like"/>
</dbReference>
<dbReference type="InterPro" id="IPR029026">
    <property type="entry name" value="tRNA_m1G_MTases_N"/>
</dbReference>
<dbReference type="NCBIfam" id="NF000985">
    <property type="entry name" value="PRK00103.1-3"/>
    <property type="match status" value="1"/>
</dbReference>
<dbReference type="NCBIfam" id="TIGR00246">
    <property type="entry name" value="tRNA_RlmH_YbeA"/>
    <property type="match status" value="1"/>
</dbReference>
<dbReference type="PANTHER" id="PTHR33603">
    <property type="entry name" value="METHYLTRANSFERASE"/>
    <property type="match status" value="1"/>
</dbReference>
<dbReference type="PANTHER" id="PTHR33603:SF1">
    <property type="entry name" value="RIBOSOMAL RNA LARGE SUBUNIT METHYLTRANSFERASE H"/>
    <property type="match status" value="1"/>
</dbReference>
<dbReference type="Pfam" id="PF02590">
    <property type="entry name" value="SPOUT_MTase"/>
    <property type="match status" value="1"/>
</dbReference>
<dbReference type="PIRSF" id="PIRSF004505">
    <property type="entry name" value="MT_bac"/>
    <property type="match status" value="1"/>
</dbReference>
<dbReference type="SUPFAM" id="SSF75217">
    <property type="entry name" value="alpha/beta knot"/>
    <property type="match status" value="1"/>
</dbReference>
<name>RLMH_STRP2</name>
<protein>
    <recommendedName>
        <fullName evidence="1">Ribosomal RNA large subunit methyltransferase H</fullName>
        <ecNumber evidence="1">2.1.1.177</ecNumber>
    </recommendedName>
    <alternativeName>
        <fullName evidence="1">23S rRNA (pseudouridine1915-N3)-methyltransferase</fullName>
    </alternativeName>
    <alternativeName>
        <fullName evidence="1">23S rRNA m3Psi1915 methyltransferase</fullName>
    </alternativeName>
    <alternativeName>
        <fullName evidence="1">rRNA (pseudouridine-N3-)-methyltransferase RlmH</fullName>
    </alternativeName>
</protein>
<proteinExistence type="inferred from homology"/>
<reference key="1">
    <citation type="journal article" date="2007" name="J. Bacteriol.">
        <title>Genome sequence of Avery's virulent serotype 2 strain D39 of Streptococcus pneumoniae and comparison with that of unencapsulated laboratory strain R6.</title>
        <authorList>
            <person name="Lanie J.A."/>
            <person name="Ng W.-L."/>
            <person name="Kazmierczak K.M."/>
            <person name="Andrzejewski T.M."/>
            <person name="Davidsen T.M."/>
            <person name="Wayne K.J."/>
            <person name="Tettelin H."/>
            <person name="Glass J.I."/>
            <person name="Winkler M.E."/>
        </authorList>
    </citation>
    <scope>NUCLEOTIDE SEQUENCE [LARGE SCALE GENOMIC DNA]</scope>
    <source>
        <strain>D39 / NCTC 7466</strain>
    </source>
</reference>
<evidence type="ECO:0000255" key="1">
    <source>
        <dbReference type="HAMAP-Rule" id="MF_00658"/>
    </source>
</evidence>
<gene>
    <name evidence="1" type="primary">rlmH</name>
    <name type="ordered locus">SPD_2067</name>
</gene>
<accession>Q04HU2</accession>
<keyword id="KW-0963">Cytoplasm</keyword>
<keyword id="KW-0489">Methyltransferase</keyword>
<keyword id="KW-1185">Reference proteome</keyword>
<keyword id="KW-0698">rRNA processing</keyword>
<keyword id="KW-0949">S-adenosyl-L-methionine</keyword>
<keyword id="KW-0808">Transferase</keyword>
<sequence>MKIKVVTVGKLKEKYLKDGIAEYSKRISRFAKFEMIELSDEKTPDKASESENQKILEIEGQRILSKIADRDFVIVLAIEGKTFFSEEFSKQLEETSIKGFSTLTFIIGGSLGLSSSVKNRANLSVSFGRLTLPHQLMRLVLVEQIYRAFTIQQGFPYHK</sequence>